<protein>
    <recommendedName>
        <fullName evidence="1">3-phosphoshikimate 1-carboxyvinyltransferase</fullName>
        <ecNumber evidence="1">2.5.1.19</ecNumber>
    </recommendedName>
    <alternativeName>
        <fullName evidence="1">5-enolpyruvylshikimate-3-phosphate synthase</fullName>
        <shortName evidence="1">EPSP synthase</shortName>
        <shortName evidence="1">EPSPS</shortName>
    </alternativeName>
</protein>
<evidence type="ECO:0000255" key="1">
    <source>
        <dbReference type="HAMAP-Rule" id="MF_00210"/>
    </source>
</evidence>
<feature type="chain" id="PRO_1000124670" description="3-phosphoshikimate 1-carboxyvinyltransferase">
    <location>
        <begin position="1"/>
        <end position="420"/>
    </location>
</feature>
<feature type="active site" description="Proton acceptor" evidence="1">
    <location>
        <position position="303"/>
    </location>
</feature>
<feature type="binding site" evidence="1">
    <location>
        <position position="20"/>
    </location>
    <ligand>
        <name>3-phosphoshikimate</name>
        <dbReference type="ChEBI" id="CHEBI:145989"/>
    </ligand>
</feature>
<feature type="binding site" evidence="1">
    <location>
        <position position="20"/>
    </location>
    <ligand>
        <name>phosphoenolpyruvate</name>
        <dbReference type="ChEBI" id="CHEBI:58702"/>
    </ligand>
</feature>
<feature type="binding site" evidence="1">
    <location>
        <position position="21"/>
    </location>
    <ligand>
        <name>3-phosphoshikimate</name>
        <dbReference type="ChEBI" id="CHEBI:145989"/>
    </ligand>
</feature>
<feature type="binding site" evidence="1">
    <location>
        <position position="25"/>
    </location>
    <ligand>
        <name>3-phosphoshikimate</name>
        <dbReference type="ChEBI" id="CHEBI:145989"/>
    </ligand>
</feature>
<feature type="binding site" evidence="1">
    <location>
        <position position="90"/>
    </location>
    <ligand>
        <name>phosphoenolpyruvate</name>
        <dbReference type="ChEBI" id="CHEBI:58702"/>
    </ligand>
</feature>
<feature type="binding site" evidence="1">
    <location>
        <position position="118"/>
    </location>
    <ligand>
        <name>phosphoenolpyruvate</name>
        <dbReference type="ChEBI" id="CHEBI:58702"/>
    </ligand>
</feature>
<feature type="binding site" evidence="1">
    <location>
        <position position="159"/>
    </location>
    <ligand>
        <name>3-phosphoshikimate</name>
        <dbReference type="ChEBI" id="CHEBI:145989"/>
    </ligand>
</feature>
<feature type="binding site" evidence="1">
    <location>
        <position position="160"/>
    </location>
    <ligand>
        <name>3-phosphoshikimate</name>
        <dbReference type="ChEBI" id="CHEBI:145989"/>
    </ligand>
</feature>
<feature type="binding site" evidence="1">
    <location>
        <position position="161"/>
    </location>
    <ligand>
        <name>3-phosphoshikimate</name>
        <dbReference type="ChEBI" id="CHEBI:145989"/>
    </ligand>
</feature>
<feature type="binding site" evidence="1">
    <location>
        <position position="161"/>
    </location>
    <ligand>
        <name>phosphoenolpyruvate</name>
        <dbReference type="ChEBI" id="CHEBI:58702"/>
    </ligand>
</feature>
<feature type="binding site" evidence="1">
    <location>
        <position position="187"/>
    </location>
    <ligand>
        <name>3-phosphoshikimate</name>
        <dbReference type="ChEBI" id="CHEBI:145989"/>
    </ligand>
</feature>
<feature type="binding site" evidence="1">
    <location>
        <position position="303"/>
    </location>
    <ligand>
        <name>3-phosphoshikimate</name>
        <dbReference type="ChEBI" id="CHEBI:145989"/>
    </ligand>
</feature>
<feature type="binding site" evidence="1">
    <location>
        <position position="330"/>
    </location>
    <ligand>
        <name>3-phosphoshikimate</name>
        <dbReference type="ChEBI" id="CHEBI:145989"/>
    </ligand>
</feature>
<feature type="binding site" evidence="1">
    <location>
        <position position="334"/>
    </location>
    <ligand>
        <name>phosphoenolpyruvate</name>
        <dbReference type="ChEBI" id="CHEBI:58702"/>
    </ligand>
</feature>
<feature type="binding site" evidence="1">
    <location>
        <position position="376"/>
    </location>
    <ligand>
        <name>phosphoenolpyruvate</name>
        <dbReference type="ChEBI" id="CHEBI:58702"/>
    </ligand>
</feature>
<feature type="binding site" evidence="1">
    <location>
        <position position="402"/>
    </location>
    <ligand>
        <name>phosphoenolpyruvate</name>
        <dbReference type="ChEBI" id="CHEBI:58702"/>
    </ligand>
</feature>
<name>AROA_BRAHW</name>
<sequence length="420" mass="46444">MTLTIKPSEIFGSIYIQMSKSDAHRALIASSLAKTPSIIKRWIDNVSVDVEVTKNAVSNFADLEIIDDNLKVFPKKEYKKELVIDVKESGSSLRFLIPIMSAFGITCTFTGSKKLFSRPIDVYKKIWKEEGLEFIHSEDSIKISGQLKASNFKVLGNLSSQFLSGLLFALPLLDGNSNIIIDGELESEPYVMMTLKTLKAANIETLRHDNNIIEVYGNQEYSGIDYEVESDWSHAAFFAAAGALGGETTLYGLNKYSIQGDKEILNILKFMGASVSYNDDNSITIKKTNRLNALDIDMSDIPDLGPIITTLAATAKGRTRLYNAGRLRYKESDRMNDLMDSFSRIGANIEVSEDEILIEGVERLKGGNTTSHNDHRIAMALAVASAVSDNDIIIDDAESINKSSFNFIEQFRSIGAKVVS</sequence>
<keyword id="KW-0028">Amino-acid biosynthesis</keyword>
<keyword id="KW-0057">Aromatic amino acid biosynthesis</keyword>
<keyword id="KW-0963">Cytoplasm</keyword>
<keyword id="KW-0808">Transferase</keyword>
<dbReference type="EC" id="2.5.1.19" evidence="1"/>
<dbReference type="EMBL" id="CP001357">
    <property type="protein sequence ID" value="ACN83291.1"/>
    <property type="molecule type" value="Genomic_DNA"/>
</dbReference>
<dbReference type="RefSeq" id="WP_012670340.1">
    <property type="nucleotide sequence ID" value="NC_012225.1"/>
</dbReference>
<dbReference type="SMR" id="C0QZK3"/>
<dbReference type="STRING" id="565034.BHWA1_00798"/>
<dbReference type="GeneID" id="63961910"/>
<dbReference type="KEGG" id="bhy:BHWA1_00798"/>
<dbReference type="eggNOG" id="COG0128">
    <property type="taxonomic scope" value="Bacteria"/>
</dbReference>
<dbReference type="HOGENOM" id="CLU_024321_0_0_12"/>
<dbReference type="UniPathway" id="UPA00053">
    <property type="reaction ID" value="UER00089"/>
</dbReference>
<dbReference type="Proteomes" id="UP000001803">
    <property type="component" value="Chromosome"/>
</dbReference>
<dbReference type="GO" id="GO:0005737">
    <property type="term" value="C:cytoplasm"/>
    <property type="evidence" value="ECO:0007669"/>
    <property type="project" value="UniProtKB-SubCell"/>
</dbReference>
<dbReference type="GO" id="GO:0003866">
    <property type="term" value="F:3-phosphoshikimate 1-carboxyvinyltransferase activity"/>
    <property type="evidence" value="ECO:0007669"/>
    <property type="project" value="UniProtKB-UniRule"/>
</dbReference>
<dbReference type="GO" id="GO:0008652">
    <property type="term" value="P:amino acid biosynthetic process"/>
    <property type="evidence" value="ECO:0007669"/>
    <property type="project" value="UniProtKB-KW"/>
</dbReference>
<dbReference type="GO" id="GO:0009073">
    <property type="term" value="P:aromatic amino acid family biosynthetic process"/>
    <property type="evidence" value="ECO:0007669"/>
    <property type="project" value="UniProtKB-KW"/>
</dbReference>
<dbReference type="GO" id="GO:0009423">
    <property type="term" value="P:chorismate biosynthetic process"/>
    <property type="evidence" value="ECO:0007669"/>
    <property type="project" value="UniProtKB-UniRule"/>
</dbReference>
<dbReference type="Gene3D" id="3.65.10.10">
    <property type="entry name" value="Enolpyruvate transferase domain"/>
    <property type="match status" value="2"/>
</dbReference>
<dbReference type="HAMAP" id="MF_00210">
    <property type="entry name" value="EPSP_synth"/>
    <property type="match status" value="1"/>
</dbReference>
<dbReference type="InterPro" id="IPR001986">
    <property type="entry name" value="Enolpyruvate_Tfrase_dom"/>
</dbReference>
<dbReference type="InterPro" id="IPR036968">
    <property type="entry name" value="Enolpyruvate_Tfrase_sf"/>
</dbReference>
<dbReference type="InterPro" id="IPR006264">
    <property type="entry name" value="EPSP_synthase"/>
</dbReference>
<dbReference type="InterPro" id="IPR023193">
    <property type="entry name" value="EPSP_synthase_CS"/>
</dbReference>
<dbReference type="InterPro" id="IPR013792">
    <property type="entry name" value="RNA3'P_cycl/enolpyr_Trfase_a/b"/>
</dbReference>
<dbReference type="NCBIfam" id="TIGR01356">
    <property type="entry name" value="aroA"/>
    <property type="match status" value="1"/>
</dbReference>
<dbReference type="PANTHER" id="PTHR21090">
    <property type="entry name" value="AROM/DEHYDROQUINATE SYNTHASE"/>
    <property type="match status" value="1"/>
</dbReference>
<dbReference type="PANTHER" id="PTHR21090:SF5">
    <property type="entry name" value="PENTAFUNCTIONAL AROM POLYPEPTIDE"/>
    <property type="match status" value="1"/>
</dbReference>
<dbReference type="Pfam" id="PF00275">
    <property type="entry name" value="EPSP_synthase"/>
    <property type="match status" value="1"/>
</dbReference>
<dbReference type="PIRSF" id="PIRSF000505">
    <property type="entry name" value="EPSPS"/>
    <property type="match status" value="1"/>
</dbReference>
<dbReference type="SUPFAM" id="SSF55205">
    <property type="entry name" value="EPT/RTPC-like"/>
    <property type="match status" value="1"/>
</dbReference>
<dbReference type="PROSITE" id="PS00885">
    <property type="entry name" value="EPSP_SYNTHASE_2"/>
    <property type="match status" value="1"/>
</dbReference>
<accession>C0QZK3</accession>
<organism>
    <name type="scientific">Brachyspira hyodysenteriae (strain ATCC 49526 / WA1)</name>
    <dbReference type="NCBI Taxonomy" id="565034"/>
    <lineage>
        <taxon>Bacteria</taxon>
        <taxon>Pseudomonadati</taxon>
        <taxon>Spirochaetota</taxon>
        <taxon>Spirochaetia</taxon>
        <taxon>Brachyspirales</taxon>
        <taxon>Brachyspiraceae</taxon>
        <taxon>Brachyspira</taxon>
    </lineage>
</organism>
<proteinExistence type="inferred from homology"/>
<gene>
    <name evidence="1" type="primary">aroA</name>
    <name type="ordered locus">BHWA1_00798</name>
</gene>
<comment type="function">
    <text evidence="1">Catalyzes the transfer of the enolpyruvyl moiety of phosphoenolpyruvate (PEP) to the 5-hydroxyl of shikimate-3-phosphate (S3P) to produce enolpyruvyl shikimate-3-phosphate and inorganic phosphate.</text>
</comment>
<comment type="catalytic activity">
    <reaction evidence="1">
        <text>3-phosphoshikimate + phosphoenolpyruvate = 5-O-(1-carboxyvinyl)-3-phosphoshikimate + phosphate</text>
        <dbReference type="Rhea" id="RHEA:21256"/>
        <dbReference type="ChEBI" id="CHEBI:43474"/>
        <dbReference type="ChEBI" id="CHEBI:57701"/>
        <dbReference type="ChEBI" id="CHEBI:58702"/>
        <dbReference type="ChEBI" id="CHEBI:145989"/>
        <dbReference type="EC" id="2.5.1.19"/>
    </reaction>
    <physiologicalReaction direction="left-to-right" evidence="1">
        <dbReference type="Rhea" id="RHEA:21257"/>
    </physiologicalReaction>
</comment>
<comment type="pathway">
    <text evidence="1">Metabolic intermediate biosynthesis; chorismate biosynthesis; chorismate from D-erythrose 4-phosphate and phosphoenolpyruvate: step 6/7.</text>
</comment>
<comment type="subunit">
    <text evidence="1">Monomer.</text>
</comment>
<comment type="subcellular location">
    <subcellularLocation>
        <location evidence="1">Cytoplasm</location>
    </subcellularLocation>
</comment>
<comment type="similarity">
    <text evidence="1">Belongs to the EPSP synthase family.</text>
</comment>
<reference key="1">
    <citation type="journal article" date="2009" name="PLoS ONE">
        <title>Genome sequence of the pathogenic intestinal spirochete Brachyspira hyodysenteriae reveals adaptations to its lifestyle in the porcine large intestine.</title>
        <authorList>
            <person name="Bellgard M.I."/>
            <person name="Wanchanthuek P."/>
            <person name="La T."/>
            <person name="Ryan K."/>
            <person name="Moolhuijzen P."/>
            <person name="Albertyn Z."/>
            <person name="Shaban B."/>
            <person name="Motro Y."/>
            <person name="Dunn D.S."/>
            <person name="Schibeci D."/>
            <person name="Hunter A."/>
            <person name="Barrero R."/>
            <person name="Phillips N.D."/>
            <person name="Hampson D.J."/>
        </authorList>
    </citation>
    <scope>NUCLEOTIDE SEQUENCE [LARGE SCALE GENOMIC DNA]</scope>
    <source>
        <strain>ATCC 49526 / WA1</strain>
    </source>
</reference>